<accession>Q6Y5M7</accession>
<reference key="1">
    <citation type="journal article" date="2004" name="Fungal Genet. Biol.">
        <title>Evolution of the gene encoding mitochondrial intermediate peptidase and its cosegregation with the A mating-type locus of mushroom fungi.</title>
        <authorList>
            <person name="James T.Y."/>
            <person name="Kuees U."/>
            <person name="Rehner S.A."/>
            <person name="Vilgalys R."/>
        </authorList>
    </citation>
    <scope>NUCLEOTIDE SEQUENCE [GENOMIC DNA]</scope>
    <source>
        <strain>Cb.M8</strain>
    </source>
</reference>
<sequence>MLARPSTTVLARRPFFRFRGCLNEPRPTKARCLATAATHHQIPSTVDDKALVDLFDQPSLSKVRSHFHSTGLFGHPSLTHPRSLVSLAESTLVRAQLLTQRILDAKESEDELAHVVKNLDRLSDMLCGVIDLAELVRNAHPDRLWVEAGNHAYETLCEFMNVLNTHTGLNDTLKTVLSNPTLVKSLDPEAYQTALIFSRDFEKSGIDLPPATRNKFVSLSSDILILGRQFLENASTPRPPTSVKASELAGLKDKGMGVRLQLQAQFTNRDLQVYPGSLQAQMIMRAAPNEEPRRKLYLAANSSTPEQIHVLETLLKKRAELAQLVGRDSFAHMTLDDKMAKKPEHVTNFLDALIDHTRPFARNALRTLAQRKQAHHNLPALPVIQAWDRDFYCPPDPPAPPIPLPPLTIGTVFMGLSRLFRHLYGVSLRPAQAASGEVWHPDVQKLEVVDEQQGIIGWIYADLFPRRGKASGAAHYTVRCSRRTDDDDEANDGMFEGTELQIQESQQFEAVKRHRLPNQEGVYQLPLVVLLTEFARPSLSKGAAVLEWHEVQTLFHEMGHAMHSMLGRTEYQNVSGTRCATDFVELPSILMEHFLNSPAVLSLFDADNTTSLRQIGNHHNDPCHAIDTYSQIMLAVVDQVYHSPSVLNSSFDSTNEFANLVNKRGLIPYVPGTSFQTQFGHLFGYGATYYSYLFDRAIASRVWSKVFSRDPLNRELGEQYKQEVLRWGGARDPWEMVSTLLDQPELAAGDAEAMREVGRWRIEDEVGNSGRH</sequence>
<proteinExistence type="inferred from homology"/>
<evidence type="ECO:0000250" key="1"/>
<evidence type="ECO:0000255" key="2"/>
<evidence type="ECO:0000255" key="3">
    <source>
        <dbReference type="PROSITE-ProRule" id="PRU10095"/>
    </source>
</evidence>
<evidence type="ECO:0000305" key="4"/>
<dbReference type="EC" id="3.4.24.59"/>
<dbReference type="EMBL" id="AY179561">
    <property type="protein sequence ID" value="AAO61500.1"/>
    <property type="molecule type" value="Genomic_DNA"/>
</dbReference>
<dbReference type="SMR" id="Q6Y5M7"/>
<dbReference type="GO" id="GO:0005759">
    <property type="term" value="C:mitochondrial matrix"/>
    <property type="evidence" value="ECO:0007669"/>
    <property type="project" value="UniProtKB-SubCell"/>
</dbReference>
<dbReference type="GO" id="GO:0046872">
    <property type="term" value="F:metal ion binding"/>
    <property type="evidence" value="ECO:0007669"/>
    <property type="project" value="UniProtKB-KW"/>
</dbReference>
<dbReference type="GO" id="GO:0004222">
    <property type="term" value="F:metalloendopeptidase activity"/>
    <property type="evidence" value="ECO:0007669"/>
    <property type="project" value="UniProtKB-EC"/>
</dbReference>
<dbReference type="GO" id="GO:0006518">
    <property type="term" value="P:peptide metabolic process"/>
    <property type="evidence" value="ECO:0007669"/>
    <property type="project" value="TreeGrafter"/>
</dbReference>
<dbReference type="GO" id="GO:0006627">
    <property type="term" value="P:protein processing involved in protein targeting to mitochondrion"/>
    <property type="evidence" value="ECO:0007669"/>
    <property type="project" value="TreeGrafter"/>
</dbReference>
<dbReference type="CDD" id="cd06457">
    <property type="entry name" value="M3A_MIP"/>
    <property type="match status" value="1"/>
</dbReference>
<dbReference type="FunFam" id="3.40.390.10:FF:000055">
    <property type="entry name" value="Related to mitochondrial intermediate peptidase"/>
    <property type="match status" value="1"/>
</dbReference>
<dbReference type="Gene3D" id="1.10.1370.40">
    <property type="match status" value="1"/>
</dbReference>
<dbReference type="Gene3D" id="1.10.1370.10">
    <property type="entry name" value="Neurolysin, domain 3"/>
    <property type="match status" value="1"/>
</dbReference>
<dbReference type="InterPro" id="IPR033851">
    <property type="entry name" value="M3A_MIP"/>
</dbReference>
<dbReference type="InterPro" id="IPR024077">
    <property type="entry name" value="Neurolysin/TOP_dom2"/>
</dbReference>
<dbReference type="InterPro" id="IPR045090">
    <property type="entry name" value="Pept_M3A_M3B"/>
</dbReference>
<dbReference type="InterPro" id="IPR001567">
    <property type="entry name" value="Pept_M3A_M3B_dom"/>
</dbReference>
<dbReference type="PANTHER" id="PTHR11804:SF79">
    <property type="entry name" value="MITOCHONDRIAL INTERMEDIATE PEPTIDASE"/>
    <property type="match status" value="1"/>
</dbReference>
<dbReference type="PANTHER" id="PTHR11804">
    <property type="entry name" value="PROTEASE M3 THIMET OLIGOPEPTIDASE-RELATED"/>
    <property type="match status" value="1"/>
</dbReference>
<dbReference type="Pfam" id="PF01432">
    <property type="entry name" value="Peptidase_M3"/>
    <property type="match status" value="1"/>
</dbReference>
<dbReference type="SUPFAM" id="SSF55486">
    <property type="entry name" value="Metalloproteases ('zincins'), catalytic domain"/>
    <property type="match status" value="1"/>
</dbReference>
<dbReference type="PROSITE" id="PS00142">
    <property type="entry name" value="ZINC_PROTEASE"/>
    <property type="match status" value="1"/>
</dbReference>
<name>PMIP_COPSC</name>
<organism>
    <name type="scientific">Coprinopsis scobicola</name>
    <name type="common">Ink cap fungus</name>
    <dbReference type="NCBI Taxonomy" id="71696"/>
    <lineage>
        <taxon>Eukaryota</taxon>
        <taxon>Fungi</taxon>
        <taxon>Dikarya</taxon>
        <taxon>Basidiomycota</taxon>
        <taxon>Agaricomycotina</taxon>
        <taxon>Agaricomycetes</taxon>
        <taxon>Agaricomycetidae</taxon>
        <taxon>Agaricales</taxon>
        <taxon>Agaricineae</taxon>
        <taxon>Psathyrellaceae</taxon>
        <taxon>Coprinopsis</taxon>
    </lineage>
</organism>
<protein>
    <recommendedName>
        <fullName>Mitochondrial intermediate peptidase</fullName>
        <shortName>MIP</shortName>
        <ecNumber>3.4.24.59</ecNumber>
    </recommendedName>
    <alternativeName>
        <fullName>Octapeptidyl aminopeptidase</fullName>
    </alternativeName>
</protein>
<keyword id="KW-0378">Hydrolase</keyword>
<keyword id="KW-0479">Metal-binding</keyword>
<keyword id="KW-0482">Metalloprotease</keyword>
<keyword id="KW-0496">Mitochondrion</keyword>
<keyword id="KW-0645">Protease</keyword>
<keyword id="KW-0809">Transit peptide</keyword>
<keyword id="KW-0862">Zinc</keyword>
<gene>
    <name type="primary">OCT1</name>
    <name type="synonym">MIP</name>
</gene>
<comment type="function">
    <text evidence="1">Cleaves proteins, imported into the mitochondrion, to their mature size. While most mitochondrial precursor proteins are processed to the mature form in one step by mitochondrial processing peptidase (MPP), the sequential cleavage by MIP of an octapeptide after initial processing by MPP is a required step for a subgroup of nuclear-encoded precursor proteins destined for the matrix or the inner membrane (By similarity).</text>
</comment>
<comment type="catalytic activity">
    <reaction>
        <text>Release of an N-terminal octapeptide as second stage of processing of some proteins imported into the mitochondrion.</text>
        <dbReference type="EC" id="3.4.24.59"/>
    </reaction>
</comment>
<comment type="cofactor">
    <cofactor evidence="1">
        <name>Zn(2+)</name>
        <dbReference type="ChEBI" id="CHEBI:29105"/>
    </cofactor>
    <text evidence="1">Binds 1 zinc ion.</text>
</comment>
<comment type="subcellular location">
    <subcellularLocation>
        <location evidence="1">Mitochondrion matrix</location>
    </subcellularLocation>
</comment>
<comment type="similarity">
    <text evidence="4">Belongs to the peptidase M3 family.</text>
</comment>
<feature type="transit peptide" description="Mitochondrion" evidence="2">
    <location>
        <begin position="1"/>
        <end position="33"/>
    </location>
</feature>
<feature type="chain" id="PRO_0000343201" description="Mitochondrial intermediate peptidase">
    <location>
        <begin position="34"/>
        <end position="772"/>
    </location>
</feature>
<feature type="active site" evidence="3">
    <location>
        <position position="557"/>
    </location>
</feature>
<feature type="binding site" evidence="3">
    <location>
        <position position="556"/>
    </location>
    <ligand>
        <name>Zn(2+)</name>
        <dbReference type="ChEBI" id="CHEBI:29105"/>
        <note>catalytic</note>
    </ligand>
</feature>
<feature type="binding site" evidence="3">
    <location>
        <position position="560"/>
    </location>
    <ligand>
        <name>Zn(2+)</name>
        <dbReference type="ChEBI" id="CHEBI:29105"/>
        <note>catalytic</note>
    </ligand>
</feature>
<feature type="binding site" evidence="3">
    <location>
        <position position="563"/>
    </location>
    <ligand>
        <name>Zn(2+)</name>
        <dbReference type="ChEBI" id="CHEBI:29105"/>
        <note>catalytic</note>
    </ligand>
</feature>